<sequence length="921" mass="104436">MPPKPLRRAGAARSQRTSPEGGAGTASPPGGTRLEVGEAEFVALCDALKAPDSVREKAWMTYQSLAAADGASAYNKKKKETWGVCIFIVAIDLDEMTFTFTELLKSLSISVCTFFQFLKEVDVNMDTVSTKVDSTVSRLKKKYDVLLALYHKFERTCGLIYLEQPSSEISAELSSVLVLKNYWITFLLAKGKVLQMEDDLVISFQLLLCVLDYFIKLSPPAMLKEPYKSAVTALTVNGSTRTPRRGQNRNARASKQIDTDTKVIEILCKEHDCNLDEVKNVYFTSFIPFLNSLGVVASNGLPEVDVLSKQYDELYLKNKDIDARLFLDHDETLQPDVIACSQLERTPRKNNPDEEVNHVLPQTPVRAAMNTIQQLMMILNSATDKPSDTLIAYFNNCTVNPEDSILKRVESLGHIFKKKFAEAVGQGCAEIGSQRYQLGVRLYYRVMESMLKSEEERLSVHNFSKLLNDNIFHTSLLACALEIVMATYGRTASQSDGTSAETDLSFPWILNVFDLKAFDFYKVIESFIKVEPSLTRDMIKHLERCEHRIMESLAWQSDSPLFDLIKQSKEREGQTDQPEPTSTLNLPLQHNHTAADLYLSPVRSPKKKASGHPQSGTSNPDAQPSATSQTQKPQKSTSLSLFYKKVFRLAYLRLHTLFFRLLSEHPDLEPLIWTLFQHTLQNESELMRDRHLDQIMMCSMYGICKVKNVDLRFKTIVSAYKELPNTNQETFKRVLIREEQYDSIIVFYNLVFMQKLKTNILQYASNRPPTLSPIPHIPRSPYQFSNSPRRVPAGNNIYISPLKSPYKFSDGFHSPTKMTPRSRILVSIGETFGTSEKFQKINQMVCNSESHVKRSAEPSDAPKPLKRLRFDIEGQDEADGGKHLPQESKFQQKLAEMTSTRTRMQKQKLNDGNDTSANEEK</sequence>
<organism>
    <name type="scientific">Gallus gallus</name>
    <name type="common">Chicken</name>
    <dbReference type="NCBI Taxonomy" id="9031"/>
    <lineage>
        <taxon>Eukaryota</taxon>
        <taxon>Metazoa</taxon>
        <taxon>Chordata</taxon>
        <taxon>Craniata</taxon>
        <taxon>Vertebrata</taxon>
        <taxon>Euteleostomi</taxon>
        <taxon>Archelosauria</taxon>
        <taxon>Archosauria</taxon>
        <taxon>Dinosauria</taxon>
        <taxon>Saurischia</taxon>
        <taxon>Theropoda</taxon>
        <taxon>Coelurosauria</taxon>
        <taxon>Aves</taxon>
        <taxon>Neognathae</taxon>
        <taxon>Galloanserae</taxon>
        <taxon>Galliformes</taxon>
        <taxon>Phasianidae</taxon>
        <taxon>Phasianinae</taxon>
        <taxon>Gallus</taxon>
    </lineage>
</organism>
<evidence type="ECO:0000250" key="1"/>
<evidence type="ECO:0000250" key="2">
    <source>
        <dbReference type="UniProtKB" id="P06400"/>
    </source>
</evidence>
<evidence type="ECO:0000250" key="3">
    <source>
        <dbReference type="UniProtKB" id="P13405"/>
    </source>
</evidence>
<evidence type="ECO:0000250" key="4">
    <source>
        <dbReference type="UniProtKB" id="P33568"/>
    </source>
</evidence>
<evidence type="ECO:0000256" key="5">
    <source>
        <dbReference type="SAM" id="MobiDB-lite"/>
    </source>
</evidence>
<evidence type="ECO:0000269" key="6">
    <source>
    </source>
</evidence>
<evidence type="ECO:0000305" key="7"/>
<keyword id="KW-0131">Cell cycle</keyword>
<keyword id="KW-0156">Chromatin regulator</keyword>
<keyword id="KW-0963">Cytoplasm</keyword>
<keyword id="KW-0238">DNA-binding</keyword>
<keyword id="KW-0945">Host-virus interaction</keyword>
<keyword id="KW-0539">Nucleus</keyword>
<keyword id="KW-0597">Phosphoprotein</keyword>
<keyword id="KW-1185">Reference proteome</keyword>
<keyword id="KW-0678">Repressor</keyword>
<keyword id="KW-0804">Transcription</keyword>
<keyword id="KW-0805">Transcription regulation</keyword>
<keyword id="KW-0043">Tumor suppressor</keyword>
<dbReference type="EMBL" id="X72218">
    <property type="protein sequence ID" value="CAA51019.1"/>
    <property type="molecule type" value="mRNA"/>
</dbReference>
<dbReference type="EMBL" id="U00113">
    <property type="protein sequence ID" value="AAA19644.1"/>
    <property type="status" value="ALT_FRAME"/>
    <property type="molecule type" value="mRNA"/>
</dbReference>
<dbReference type="EMBL" id="X72217">
    <property type="protein sequence ID" value="CAA51018.1"/>
    <property type="molecule type" value="Genomic_DNA"/>
</dbReference>
<dbReference type="PIR" id="S45298">
    <property type="entry name" value="S45298"/>
</dbReference>
<dbReference type="RefSeq" id="NP_989750.1">
    <property type="nucleotide sequence ID" value="NM_204419.1"/>
</dbReference>
<dbReference type="SMR" id="Q90600"/>
<dbReference type="FunCoup" id="Q90600">
    <property type="interactions" value="468"/>
</dbReference>
<dbReference type="STRING" id="9031.ENSGALP00000071459"/>
<dbReference type="PaxDb" id="9031-ENSGALP00000027407"/>
<dbReference type="GeneID" id="386582"/>
<dbReference type="KEGG" id="gga:386582"/>
<dbReference type="CTD" id="5925"/>
<dbReference type="VEuPathDB" id="HostDB:geneid_386582"/>
<dbReference type="eggNOG" id="KOG1010">
    <property type="taxonomic scope" value="Eukaryota"/>
</dbReference>
<dbReference type="InParanoid" id="Q90600"/>
<dbReference type="OrthoDB" id="844594at2759"/>
<dbReference type="PhylomeDB" id="Q90600"/>
<dbReference type="PRO" id="PR:Q90600"/>
<dbReference type="Proteomes" id="UP000000539">
    <property type="component" value="Unassembled WGS sequence"/>
</dbReference>
<dbReference type="GO" id="GO:0000785">
    <property type="term" value="C:chromatin"/>
    <property type="evidence" value="ECO:0000318"/>
    <property type="project" value="GO_Central"/>
</dbReference>
<dbReference type="GO" id="GO:0005737">
    <property type="term" value="C:cytoplasm"/>
    <property type="evidence" value="ECO:0000250"/>
    <property type="project" value="UniProtKB"/>
</dbReference>
<dbReference type="GO" id="GO:0005634">
    <property type="term" value="C:nucleus"/>
    <property type="evidence" value="ECO:0000250"/>
    <property type="project" value="UniProtKB"/>
</dbReference>
<dbReference type="GO" id="GO:0035189">
    <property type="term" value="C:Rb-E2F complex"/>
    <property type="evidence" value="ECO:0000250"/>
    <property type="project" value="UniProtKB"/>
</dbReference>
<dbReference type="GO" id="GO:0000977">
    <property type="term" value="F:RNA polymerase II transcription regulatory region sequence-specific DNA binding"/>
    <property type="evidence" value="ECO:0000318"/>
    <property type="project" value="GO_Central"/>
</dbReference>
<dbReference type="GO" id="GO:0030154">
    <property type="term" value="P:cell differentiation"/>
    <property type="evidence" value="ECO:0000318"/>
    <property type="project" value="GO_Central"/>
</dbReference>
<dbReference type="GO" id="GO:0048667">
    <property type="term" value="P:cell morphogenesis involved in neuron differentiation"/>
    <property type="evidence" value="ECO:0000318"/>
    <property type="project" value="GO_Central"/>
</dbReference>
<dbReference type="GO" id="GO:0006325">
    <property type="term" value="P:chromatin organization"/>
    <property type="evidence" value="ECO:0007669"/>
    <property type="project" value="UniProtKB-KW"/>
</dbReference>
<dbReference type="GO" id="GO:0030308">
    <property type="term" value="P:negative regulation of cell growth"/>
    <property type="evidence" value="ECO:0000250"/>
    <property type="project" value="UniProtKB"/>
</dbReference>
<dbReference type="GO" id="GO:2000134">
    <property type="term" value="P:negative regulation of G1/S transition of mitotic cell cycle"/>
    <property type="evidence" value="ECO:0000318"/>
    <property type="project" value="GO_Central"/>
</dbReference>
<dbReference type="GO" id="GO:0031175">
    <property type="term" value="P:neuron projection development"/>
    <property type="evidence" value="ECO:0000318"/>
    <property type="project" value="GO_Central"/>
</dbReference>
<dbReference type="GO" id="GO:0006357">
    <property type="term" value="P:regulation of transcription by RNA polymerase II"/>
    <property type="evidence" value="ECO:0007669"/>
    <property type="project" value="InterPro"/>
</dbReference>
<dbReference type="CDD" id="cd20599">
    <property type="entry name" value="CYCLIN_RB"/>
    <property type="match status" value="1"/>
</dbReference>
<dbReference type="FunFam" id="1.10.472.10:FF:000039">
    <property type="entry name" value="RB transcriptional corepressor 1"/>
    <property type="match status" value="1"/>
</dbReference>
<dbReference type="FunFam" id="1.10.472.140:FF:000002">
    <property type="entry name" value="RB transcriptional corepressor 1"/>
    <property type="match status" value="1"/>
</dbReference>
<dbReference type="FunFam" id="1.10.472.10:FF:000033">
    <property type="entry name" value="retinoblastoma-associated protein isoform X1"/>
    <property type="match status" value="1"/>
</dbReference>
<dbReference type="Gene3D" id="1.10.472.140">
    <property type="match status" value="1"/>
</dbReference>
<dbReference type="Gene3D" id="6.10.140.1380">
    <property type="match status" value="1"/>
</dbReference>
<dbReference type="Gene3D" id="6.10.250.530">
    <property type="match status" value="1"/>
</dbReference>
<dbReference type="Gene3D" id="1.10.472.10">
    <property type="entry name" value="Cyclin-like"/>
    <property type="match status" value="2"/>
</dbReference>
<dbReference type="InterPro" id="IPR013763">
    <property type="entry name" value="Cyclin-like_dom"/>
</dbReference>
<dbReference type="InterPro" id="IPR036915">
    <property type="entry name" value="Cyclin-like_sf"/>
</dbReference>
<dbReference type="InterPro" id="IPR002720">
    <property type="entry name" value="RB_A"/>
</dbReference>
<dbReference type="InterPro" id="IPR002719">
    <property type="entry name" value="RB_B"/>
</dbReference>
<dbReference type="InterPro" id="IPR015030">
    <property type="entry name" value="RB_C"/>
</dbReference>
<dbReference type="InterPro" id="IPR028309">
    <property type="entry name" value="RB_fam"/>
</dbReference>
<dbReference type="InterPro" id="IPR024599">
    <property type="entry name" value="RB_N"/>
</dbReference>
<dbReference type="PANTHER" id="PTHR13742:SF36">
    <property type="entry name" value="RETINOBLASTOMA-ASSOCIATED PROTEIN"/>
    <property type="match status" value="1"/>
</dbReference>
<dbReference type="PANTHER" id="PTHR13742">
    <property type="entry name" value="RETINOBLASTOMA-ASSOCIATED PROTEIN RB -RELATED"/>
    <property type="match status" value="1"/>
</dbReference>
<dbReference type="Pfam" id="PF11934">
    <property type="entry name" value="DUF3452"/>
    <property type="match status" value="1"/>
</dbReference>
<dbReference type="Pfam" id="PF01858">
    <property type="entry name" value="RB_A"/>
    <property type="match status" value="1"/>
</dbReference>
<dbReference type="Pfam" id="PF01857">
    <property type="entry name" value="RB_B"/>
    <property type="match status" value="1"/>
</dbReference>
<dbReference type="Pfam" id="PF08934">
    <property type="entry name" value="Rb_C"/>
    <property type="match status" value="1"/>
</dbReference>
<dbReference type="SMART" id="SM00385">
    <property type="entry name" value="CYCLIN"/>
    <property type="match status" value="1"/>
</dbReference>
<dbReference type="SMART" id="SM01367">
    <property type="entry name" value="DUF3452"/>
    <property type="match status" value="1"/>
</dbReference>
<dbReference type="SMART" id="SM01368">
    <property type="entry name" value="RB_A"/>
    <property type="match status" value="1"/>
</dbReference>
<dbReference type="SMART" id="SM01369">
    <property type="entry name" value="Rb_C"/>
    <property type="match status" value="1"/>
</dbReference>
<dbReference type="SUPFAM" id="SSF47954">
    <property type="entry name" value="Cyclin-like"/>
    <property type="match status" value="2"/>
</dbReference>
<feature type="chain" id="PRO_0000331619" description="Retinoblastoma-associated protein">
    <location>
        <begin position="1"/>
        <end position="921"/>
    </location>
</feature>
<feature type="region of interest" description="Disordered" evidence="5">
    <location>
        <begin position="1"/>
        <end position="31"/>
    </location>
</feature>
<feature type="region of interest" description="Disordered" evidence="5">
    <location>
        <begin position="603"/>
        <end position="634"/>
    </location>
</feature>
<feature type="region of interest" description="Disordered" evidence="5">
    <location>
        <begin position="873"/>
        <end position="921"/>
    </location>
</feature>
<feature type="short sequence motif" description="Bipartite nuclear localization signal" evidence="3">
    <location>
        <begin position="853"/>
        <end position="869"/>
    </location>
</feature>
<feature type="compositionally biased region" description="Polar residues" evidence="5">
    <location>
        <begin position="612"/>
        <end position="634"/>
    </location>
</feature>
<feature type="compositionally biased region" description="Polar residues" evidence="5">
    <location>
        <begin position="910"/>
        <end position="921"/>
    </location>
</feature>
<feature type="sequence conflict" description="In Ref. 2; AAA19644." evidence="7" ref="2">
    <original>Q</original>
    <variation>E</variation>
    <location>
        <position position="63"/>
    </location>
</feature>
<feature type="sequence conflict" description="In Ref. 2; AAA19644." evidence="7" ref="2">
    <original>E</original>
    <variation>S</variation>
    <location>
        <position position="163"/>
    </location>
</feature>
<feature type="sequence conflict" description="In Ref. 2; AAA19644." evidence="7" ref="2">
    <original>S</original>
    <variation>C</variation>
    <location>
        <position position="411"/>
    </location>
</feature>
<feature type="sequence conflict" description="In Ref. 2; AAA19644." evidence="7" ref="2">
    <original>N</original>
    <variation>G</variation>
    <location>
        <position position="619"/>
    </location>
</feature>
<feature type="sequence conflict" description="In Ref. 2; AAA19644." evidence="7" ref="2">
    <original>VP</original>
    <variation>A</variation>
    <location>
        <begin position="791"/>
        <end position="792"/>
    </location>
</feature>
<name>RB_CHICK</name>
<reference key="1">
    <citation type="journal article" date="1994" name="Cell Growth Differ.">
        <title>Structure and expression of the chicken retinoblastoma gene.</title>
        <authorList>
            <person name="Boehmelt G."/>
            <person name="Ulrich E."/>
            <person name="Kurzbauer R."/>
            <person name="Mellitzer G."/>
            <person name="Bird A."/>
            <person name="Zenke M."/>
        </authorList>
    </citation>
    <scope>NUCLEOTIDE SEQUENCE [MRNA]</scope>
    <scope>NUCLEOTIDE SEQUENCE [GENOMIC DNA] OF 1-72</scope>
    <source>
        <strain>SPAFAS</strain>
    </source>
</reference>
<reference key="2">
    <citation type="journal article" date="1994" name="Biochim. Biophys. Acta">
        <title>Characterization of a chicken cDNA encoding the retinoblastoma gene product.</title>
        <authorList>
            <person name="Feinstein R."/>
            <person name="Bolton W.K."/>
            <person name="Quinones J.N."/>
            <person name="Mosialos G."/>
            <person name="Sif S."/>
            <person name="Huff J.L."/>
            <person name="Capobianco A.J."/>
            <person name="Gilmore T.D."/>
        </authorList>
    </citation>
    <scope>NUCLEOTIDE SEQUENCE [MRNA]</scope>
</reference>
<reference key="3">
    <citation type="journal article" date="1999" name="J. Virol.">
        <title>Characterization of CELO virus proteins that modulate the pRb/E2F pathway.</title>
        <authorList>
            <person name="Lehrmann H."/>
            <person name="Cotten M."/>
        </authorList>
    </citation>
    <scope>INTERACTION WITH FOWL ADENOVIRUS 1 PROTEIN GAM-1 (MICROBIAL INFECTION)</scope>
</reference>
<protein>
    <recommendedName>
        <fullName>Retinoblastoma-associated protein</fullName>
    </recommendedName>
    <alternativeName>
        <fullName>p104</fullName>
    </alternativeName>
    <alternativeName>
        <fullName>pRb</fullName>
        <shortName>Rb</shortName>
    </alternativeName>
</protein>
<proteinExistence type="evidence at protein level"/>
<gene>
    <name type="primary">RB1</name>
</gene>
<accession>Q90600</accession>
<accession>Q788Q6</accession>
<accession>Q90599</accession>
<accession>Q91016</accession>
<comment type="function">
    <text evidence="2 3 4">Tumor suppressor that is a key regulator of the G1/S transition of the cell cycle. The hypophosphorylated form binds transcription regulators of the E2F family, preventing transcription of E2F-responsive genes. Both physically blocks E2Fs transactivating domain and recruits chromatin-modifying enzymes that actively repress transcription. Cyclin and CDK-dependent phosphorylation of RB1 induces its dissociation from E2Fs, thereby activating transcription of E2F responsive genes and triggering entry into S phase. RB1 also promotes the G0-G1 transition upon phosphorylation and activation by CDK3/cyclin-C.</text>
</comment>
<comment type="subunit">
    <text evidence="1 2">Interacts with and sequesters the E2F1 transcription factor, thereby inhibiting E2F1 transcription (By similarity). Interacts with SUV39H1, KMT5B and KMT5C (By similarity).</text>
</comment>
<comment type="subunit">
    <text evidence="6">(Microbial infection) Interacts with, and is inhibited by fowl adenovirus 1 protein GAM-1.</text>
</comment>
<comment type="subcellular location">
    <subcellularLocation>
        <location evidence="3">Nucleus</location>
    </subcellularLocation>
    <subcellularLocation>
        <location evidence="3">Cytoplasm</location>
    </subcellularLocation>
    <text evidence="3">Localizes to the cytoplasm when hyperphosphorylated.</text>
</comment>
<comment type="PTM">
    <text evidence="1">Phosphorylated in G1, thereby releasing E2F1 which is then able to activate cell growth. Dephosphorylated at the late M phase. Phosphorylation of domain C promotes interaction between the C-terminal domain C and the Pocket domain, and thereby inhibits interactions with heterodimeric E2F/DP transcription factor complexes (By similarity).</text>
</comment>
<comment type="similarity">
    <text evidence="7">Belongs to the retinoblastoma protein (RB) family.</text>
</comment>
<comment type="sequence caution" evidence="7">
    <conflict type="frameshift">
        <sequence resource="EMBL-CDS" id="AAA19644"/>
    </conflict>
</comment>